<keyword id="KW-0687">Ribonucleoprotein</keyword>
<keyword id="KW-0689">Ribosomal protein</keyword>
<keyword id="KW-0694">RNA-binding</keyword>
<keyword id="KW-0699">rRNA-binding</keyword>
<proteinExistence type="inferred from homology"/>
<feature type="chain" id="PRO_1000166249" description="Large ribosomal subunit protein uL18">
    <location>
        <begin position="1"/>
        <end position="118"/>
    </location>
</feature>
<feature type="region of interest" description="Disordered" evidence="2">
    <location>
        <begin position="1"/>
        <end position="26"/>
    </location>
</feature>
<feature type="compositionally biased region" description="Basic residues" evidence="2">
    <location>
        <begin position="10"/>
        <end position="20"/>
    </location>
</feature>
<sequence>MISKPDKNKIRQKRHRRVRGKLSGTADRPRLNVFRSNTGIYAQVIDDVAGVTLASASTLDKEVSKGTKTEQAVVVGKLVAERAVAKGISEVVFDRGGYLYHGRVKALADAARENGLKF</sequence>
<protein>
    <recommendedName>
        <fullName evidence="1">Large ribosomal subunit protein uL18</fullName>
    </recommendedName>
    <alternativeName>
        <fullName evidence="3">50S ribosomal protein L18</fullName>
    </alternativeName>
</protein>
<evidence type="ECO:0000255" key="1">
    <source>
        <dbReference type="HAMAP-Rule" id="MF_01337"/>
    </source>
</evidence>
<evidence type="ECO:0000256" key="2">
    <source>
        <dbReference type="SAM" id="MobiDB-lite"/>
    </source>
</evidence>
<evidence type="ECO:0000305" key="3"/>
<comment type="function">
    <text evidence="1">This is one of the proteins that bind and probably mediate the attachment of the 5S RNA into the large ribosomal subunit, where it forms part of the central protuberance.</text>
</comment>
<comment type="subunit">
    <text evidence="1">Part of the 50S ribosomal subunit; part of the 5S rRNA/L5/L18/L25 subcomplex. Contacts the 5S and 23S rRNAs.</text>
</comment>
<comment type="similarity">
    <text evidence="1">Belongs to the universal ribosomal protein uL18 family.</text>
</comment>
<organism>
    <name type="scientific">Streptococcus equi subsp. equi (strain 4047)</name>
    <dbReference type="NCBI Taxonomy" id="553482"/>
    <lineage>
        <taxon>Bacteria</taxon>
        <taxon>Bacillati</taxon>
        <taxon>Bacillota</taxon>
        <taxon>Bacilli</taxon>
        <taxon>Lactobacillales</taxon>
        <taxon>Streptococcaceae</taxon>
        <taxon>Streptococcus</taxon>
    </lineage>
</organism>
<gene>
    <name evidence="1" type="primary">rplR</name>
    <name type="ordered locus">SEQ_0071</name>
</gene>
<reference key="1">
    <citation type="journal article" date="2009" name="PLoS Pathog.">
        <title>Genomic evidence for the evolution of Streptococcus equi: host restriction, increased virulence, and genetic exchange with human pathogens.</title>
        <authorList>
            <person name="Holden M.T.G."/>
            <person name="Heather Z."/>
            <person name="Paillot R."/>
            <person name="Steward K.F."/>
            <person name="Webb K."/>
            <person name="Ainslie F."/>
            <person name="Jourdan T."/>
            <person name="Bason N.C."/>
            <person name="Holroyd N.E."/>
            <person name="Mungall K."/>
            <person name="Quail M.A."/>
            <person name="Sanders M."/>
            <person name="Simmonds M."/>
            <person name="Willey D."/>
            <person name="Brooks K."/>
            <person name="Aanensen D.M."/>
            <person name="Spratt B.G."/>
            <person name="Jolley K.A."/>
            <person name="Maiden M.C.J."/>
            <person name="Kehoe M."/>
            <person name="Chanter N."/>
            <person name="Bentley S.D."/>
            <person name="Robinson C."/>
            <person name="Maskell D.J."/>
            <person name="Parkhill J."/>
            <person name="Waller A.S."/>
        </authorList>
    </citation>
    <scope>NUCLEOTIDE SEQUENCE [LARGE SCALE GENOMIC DNA]</scope>
    <source>
        <strain>4047</strain>
    </source>
</reference>
<dbReference type="EMBL" id="FM204883">
    <property type="protein sequence ID" value="CAW91996.1"/>
    <property type="molecule type" value="Genomic_DNA"/>
</dbReference>
<dbReference type="RefSeq" id="WP_003010871.1">
    <property type="nucleotide sequence ID" value="NC_012471.1"/>
</dbReference>
<dbReference type="SMR" id="C0MB66"/>
<dbReference type="GeneID" id="93920920"/>
<dbReference type="KEGG" id="seu:SEQ_0071"/>
<dbReference type="HOGENOM" id="CLU_098841_0_1_9"/>
<dbReference type="OrthoDB" id="9810939at2"/>
<dbReference type="Proteomes" id="UP000001365">
    <property type="component" value="Chromosome"/>
</dbReference>
<dbReference type="GO" id="GO:0022625">
    <property type="term" value="C:cytosolic large ribosomal subunit"/>
    <property type="evidence" value="ECO:0007669"/>
    <property type="project" value="TreeGrafter"/>
</dbReference>
<dbReference type="GO" id="GO:0008097">
    <property type="term" value="F:5S rRNA binding"/>
    <property type="evidence" value="ECO:0007669"/>
    <property type="project" value="TreeGrafter"/>
</dbReference>
<dbReference type="GO" id="GO:0003735">
    <property type="term" value="F:structural constituent of ribosome"/>
    <property type="evidence" value="ECO:0007669"/>
    <property type="project" value="InterPro"/>
</dbReference>
<dbReference type="GO" id="GO:0006412">
    <property type="term" value="P:translation"/>
    <property type="evidence" value="ECO:0007669"/>
    <property type="project" value="UniProtKB-UniRule"/>
</dbReference>
<dbReference type="CDD" id="cd00432">
    <property type="entry name" value="Ribosomal_L18_L5e"/>
    <property type="match status" value="1"/>
</dbReference>
<dbReference type="FunFam" id="3.30.420.100:FF:000001">
    <property type="entry name" value="50S ribosomal protein L18"/>
    <property type="match status" value="1"/>
</dbReference>
<dbReference type="Gene3D" id="3.30.420.100">
    <property type="match status" value="1"/>
</dbReference>
<dbReference type="HAMAP" id="MF_01337_B">
    <property type="entry name" value="Ribosomal_uL18_B"/>
    <property type="match status" value="1"/>
</dbReference>
<dbReference type="InterPro" id="IPR004389">
    <property type="entry name" value="Ribosomal_uL18_bac-type"/>
</dbReference>
<dbReference type="InterPro" id="IPR005484">
    <property type="entry name" value="Ribosomal_uL18_bac/euk"/>
</dbReference>
<dbReference type="NCBIfam" id="TIGR00060">
    <property type="entry name" value="L18_bact"/>
    <property type="match status" value="1"/>
</dbReference>
<dbReference type="PANTHER" id="PTHR12899">
    <property type="entry name" value="39S RIBOSOMAL PROTEIN L18, MITOCHONDRIAL"/>
    <property type="match status" value="1"/>
</dbReference>
<dbReference type="PANTHER" id="PTHR12899:SF3">
    <property type="entry name" value="LARGE RIBOSOMAL SUBUNIT PROTEIN UL18M"/>
    <property type="match status" value="1"/>
</dbReference>
<dbReference type="Pfam" id="PF00861">
    <property type="entry name" value="Ribosomal_L18p"/>
    <property type="match status" value="1"/>
</dbReference>
<dbReference type="SUPFAM" id="SSF53137">
    <property type="entry name" value="Translational machinery components"/>
    <property type="match status" value="1"/>
</dbReference>
<name>RL18_STRE4</name>
<accession>C0MB66</accession>